<feature type="chain" id="PRO_1000050025" description="Sulfur carrier protein TusA">
    <location>
        <begin position="1"/>
        <end position="81"/>
    </location>
</feature>
<feature type="active site" description="Cysteine persulfide intermediate" evidence="1">
    <location>
        <position position="19"/>
    </location>
</feature>
<proteinExistence type="inferred from homology"/>
<reference key="1">
    <citation type="submission" date="2006-08" db="EMBL/GenBank/DDBJ databases">
        <title>Complete sequence of Shewanella frigidimarina NCIMB 400.</title>
        <authorList>
            <consortium name="US DOE Joint Genome Institute"/>
            <person name="Copeland A."/>
            <person name="Lucas S."/>
            <person name="Lapidus A."/>
            <person name="Barry K."/>
            <person name="Detter J.C."/>
            <person name="Glavina del Rio T."/>
            <person name="Hammon N."/>
            <person name="Israni S."/>
            <person name="Dalin E."/>
            <person name="Tice H."/>
            <person name="Pitluck S."/>
            <person name="Fredrickson J.K."/>
            <person name="Kolker E."/>
            <person name="McCuel L.A."/>
            <person name="DiChristina T."/>
            <person name="Nealson K.H."/>
            <person name="Newman D."/>
            <person name="Tiedje J.M."/>
            <person name="Zhou J."/>
            <person name="Romine M.F."/>
            <person name="Culley D.E."/>
            <person name="Serres M."/>
            <person name="Chertkov O."/>
            <person name="Brettin T."/>
            <person name="Bruce D."/>
            <person name="Han C."/>
            <person name="Tapia R."/>
            <person name="Gilna P."/>
            <person name="Schmutz J."/>
            <person name="Larimer F."/>
            <person name="Land M."/>
            <person name="Hauser L."/>
            <person name="Kyrpides N."/>
            <person name="Mikhailova N."/>
            <person name="Richardson P."/>
        </authorList>
    </citation>
    <scope>NUCLEOTIDE SEQUENCE [LARGE SCALE GENOMIC DNA]</scope>
    <source>
        <strain>NCIMB 400</strain>
    </source>
</reference>
<sequence length="81" mass="9209">MNDIYTQAQHQLDALGLRCPEPVMMIRKTVRKMAEGETLLVIADDPATTRDIPSFCEFMDHTLIASDISKTPYHYLLKKGL</sequence>
<evidence type="ECO:0000255" key="1">
    <source>
        <dbReference type="HAMAP-Rule" id="MF_00413"/>
    </source>
</evidence>
<dbReference type="EMBL" id="CP000447">
    <property type="protein sequence ID" value="ABI69874.1"/>
    <property type="molecule type" value="Genomic_DNA"/>
</dbReference>
<dbReference type="RefSeq" id="WP_011635503.1">
    <property type="nucleotide sequence ID" value="NC_008345.1"/>
</dbReference>
<dbReference type="SMR" id="Q08A41"/>
<dbReference type="STRING" id="318167.Sfri_0011"/>
<dbReference type="KEGG" id="sfr:Sfri_0011"/>
<dbReference type="eggNOG" id="COG0425">
    <property type="taxonomic scope" value="Bacteria"/>
</dbReference>
<dbReference type="HOGENOM" id="CLU_165255_5_0_6"/>
<dbReference type="OrthoDB" id="9797352at2"/>
<dbReference type="Proteomes" id="UP000000684">
    <property type="component" value="Chromosome"/>
</dbReference>
<dbReference type="GO" id="GO:0005737">
    <property type="term" value="C:cytoplasm"/>
    <property type="evidence" value="ECO:0007669"/>
    <property type="project" value="UniProtKB-SubCell"/>
</dbReference>
<dbReference type="GO" id="GO:0097163">
    <property type="term" value="F:sulfur carrier activity"/>
    <property type="evidence" value="ECO:0007669"/>
    <property type="project" value="UniProtKB-UniRule"/>
</dbReference>
<dbReference type="GO" id="GO:0002143">
    <property type="term" value="P:tRNA wobble position uridine thiolation"/>
    <property type="evidence" value="ECO:0007669"/>
    <property type="project" value="InterPro"/>
</dbReference>
<dbReference type="CDD" id="cd03423">
    <property type="entry name" value="SirA"/>
    <property type="match status" value="1"/>
</dbReference>
<dbReference type="Gene3D" id="3.30.110.40">
    <property type="entry name" value="TusA-like domain"/>
    <property type="match status" value="1"/>
</dbReference>
<dbReference type="HAMAP" id="MF_00413">
    <property type="entry name" value="Thiourid_synth_A"/>
    <property type="match status" value="1"/>
</dbReference>
<dbReference type="InterPro" id="IPR022931">
    <property type="entry name" value="Sulphur_carrier_TusA"/>
</dbReference>
<dbReference type="InterPro" id="IPR001455">
    <property type="entry name" value="TusA-like"/>
</dbReference>
<dbReference type="InterPro" id="IPR036868">
    <property type="entry name" value="TusA-like_sf"/>
</dbReference>
<dbReference type="NCBIfam" id="NF001423">
    <property type="entry name" value="PRK00299.1"/>
    <property type="match status" value="1"/>
</dbReference>
<dbReference type="PANTHER" id="PTHR33279:SF2">
    <property type="entry name" value="SULFUR CARRIER PROTEIN TUSA"/>
    <property type="match status" value="1"/>
</dbReference>
<dbReference type="PANTHER" id="PTHR33279">
    <property type="entry name" value="SULFUR CARRIER PROTEIN YEDF-RELATED"/>
    <property type="match status" value="1"/>
</dbReference>
<dbReference type="Pfam" id="PF01206">
    <property type="entry name" value="TusA"/>
    <property type="match status" value="1"/>
</dbReference>
<dbReference type="SUPFAM" id="SSF64307">
    <property type="entry name" value="SirA-like"/>
    <property type="match status" value="1"/>
</dbReference>
<dbReference type="PROSITE" id="PS01148">
    <property type="entry name" value="UPF0033"/>
    <property type="match status" value="1"/>
</dbReference>
<name>TUSA_SHEFN</name>
<comment type="function">
    <text evidence="1">Sulfur carrier protein which probably makes part of a sulfur-relay system.</text>
</comment>
<comment type="subcellular location">
    <subcellularLocation>
        <location evidence="1">Cytoplasm</location>
    </subcellularLocation>
</comment>
<comment type="similarity">
    <text evidence="1">Belongs to the sulfur carrier protein TusA family.</text>
</comment>
<accession>Q08A41</accession>
<keyword id="KW-0963">Cytoplasm</keyword>
<keyword id="KW-1185">Reference proteome</keyword>
<organism>
    <name type="scientific">Shewanella frigidimarina (strain NCIMB 400)</name>
    <dbReference type="NCBI Taxonomy" id="318167"/>
    <lineage>
        <taxon>Bacteria</taxon>
        <taxon>Pseudomonadati</taxon>
        <taxon>Pseudomonadota</taxon>
        <taxon>Gammaproteobacteria</taxon>
        <taxon>Alteromonadales</taxon>
        <taxon>Shewanellaceae</taxon>
        <taxon>Shewanella</taxon>
    </lineage>
</organism>
<protein>
    <recommendedName>
        <fullName evidence="1">Sulfur carrier protein TusA</fullName>
    </recommendedName>
</protein>
<gene>
    <name evidence="1" type="primary">tusA</name>
    <name type="ordered locus">Sfri_0011</name>
</gene>